<keyword id="KW-0378">Hydrolase</keyword>
<keyword id="KW-1185">Reference proteome</keyword>
<reference key="1">
    <citation type="journal article" date="2002" name="J. Bacteriol.">
        <title>Whole-genome comparison of Mycobacterium tuberculosis clinical and laboratory strains.</title>
        <authorList>
            <person name="Fleischmann R.D."/>
            <person name="Alland D."/>
            <person name="Eisen J.A."/>
            <person name="Carpenter L."/>
            <person name="White O."/>
            <person name="Peterson J.D."/>
            <person name="DeBoy R.T."/>
            <person name="Dodson R.J."/>
            <person name="Gwinn M.L."/>
            <person name="Haft D.H."/>
            <person name="Hickey E.K."/>
            <person name="Kolonay J.F."/>
            <person name="Nelson W.C."/>
            <person name="Umayam L.A."/>
            <person name="Ermolaeva M.D."/>
            <person name="Salzberg S.L."/>
            <person name="Delcher A."/>
            <person name="Utterback T.R."/>
            <person name="Weidman J.F."/>
            <person name="Khouri H.M."/>
            <person name="Gill J."/>
            <person name="Mikula A."/>
            <person name="Bishai W."/>
            <person name="Jacobs W.R. Jr."/>
            <person name="Venter J.C."/>
            <person name="Fraser C.M."/>
        </authorList>
    </citation>
    <scope>NUCLEOTIDE SEQUENCE [LARGE SCALE GENOMIC DNA]</scope>
    <source>
        <strain>CDC 1551 / Oshkosh</strain>
    </source>
</reference>
<name>GPGP_MYCTO</name>
<sequence length="223" mass="24174">MRARRLVMLRHGQTDYNVGSRMQGQLDTELSELGRTQAVAAAEVLGKRQPLLIVSSDLRRAYDTAVKLGERTGLVVRVDTRLRETHLGDWQGLTHAQIDADAPGARLAWREDATWAPHGGESRVDVAARSRPLVAELVASEPEWGGADEPDRPVVLVAHGGLIAALSAALLKLPVANWPALGGMGNASWTQLSGHWAPGSDFESIRWRLDVWNASAQVSSDVL</sequence>
<organism>
    <name type="scientific">Mycobacterium tuberculosis (strain CDC 1551 / Oshkosh)</name>
    <dbReference type="NCBI Taxonomy" id="83331"/>
    <lineage>
        <taxon>Bacteria</taxon>
        <taxon>Bacillati</taxon>
        <taxon>Actinomycetota</taxon>
        <taxon>Actinomycetes</taxon>
        <taxon>Mycobacteriales</taxon>
        <taxon>Mycobacteriaceae</taxon>
        <taxon>Mycobacterium</taxon>
        <taxon>Mycobacterium tuberculosis complex</taxon>
    </lineage>
</organism>
<evidence type="ECO:0000250" key="1">
    <source>
        <dbReference type="UniProtKB" id="P9WIC7"/>
    </source>
</evidence>
<evidence type="ECO:0000305" key="2"/>
<gene>
    <name type="primary">gpgP</name>
    <name type="ordered locus">MT2492</name>
</gene>
<feature type="chain" id="PRO_0000428030" description="Glucosyl-3-phosphoglycerate phosphatase">
    <location>
        <begin position="1"/>
        <end position="223"/>
    </location>
</feature>
<feature type="active site" description="Tele-phosphohistidine intermediate" evidence="1">
    <location>
        <position position="11"/>
    </location>
</feature>
<feature type="active site" description="Proton donor/acceptor" evidence="1">
    <location>
        <position position="84"/>
    </location>
</feature>
<feature type="binding site" evidence="1">
    <location>
        <position position="10"/>
    </location>
    <ligand>
        <name>substrate</name>
    </ligand>
</feature>
<feature type="binding site" evidence="1">
    <location>
        <position position="60"/>
    </location>
    <ligand>
        <name>substrate</name>
    </ligand>
</feature>
<feature type="binding site" evidence="1">
    <location>
        <position position="159"/>
    </location>
    <ligand>
        <name>substrate</name>
    </ligand>
</feature>
<dbReference type="EC" id="3.1.3.85" evidence="1"/>
<dbReference type="EC" id="3.1.3.70" evidence="1"/>
<dbReference type="EMBL" id="AE000516">
    <property type="protein sequence ID" value="AAK46789.1"/>
    <property type="molecule type" value="Genomic_DNA"/>
</dbReference>
<dbReference type="PIR" id="F70685">
    <property type="entry name" value="F70685"/>
</dbReference>
<dbReference type="RefSeq" id="WP_003412388.1">
    <property type="nucleotide sequence ID" value="NZ_KK341227.1"/>
</dbReference>
<dbReference type="SMR" id="P9WIC6"/>
<dbReference type="GeneID" id="45426406"/>
<dbReference type="KEGG" id="mtc:MT2492"/>
<dbReference type="PATRIC" id="fig|83331.31.peg.2687"/>
<dbReference type="HOGENOM" id="CLU_033323_9_5_11"/>
<dbReference type="BRENDA" id="3.1.3.85">
    <property type="organism ID" value="3445"/>
</dbReference>
<dbReference type="EvolutionaryTrace" id="P9WIC6"/>
<dbReference type="Proteomes" id="UP000001020">
    <property type="component" value="Chromosome"/>
</dbReference>
<dbReference type="GO" id="GO:0005737">
    <property type="term" value="C:cytoplasm"/>
    <property type="evidence" value="ECO:0007669"/>
    <property type="project" value="TreeGrafter"/>
</dbReference>
<dbReference type="GO" id="GO:0050531">
    <property type="term" value="F:mannosyl-3-phosphoglycerate phosphatase activity"/>
    <property type="evidence" value="ECO:0007669"/>
    <property type="project" value="UniProtKB-EC"/>
</dbReference>
<dbReference type="CDD" id="cd07067">
    <property type="entry name" value="HP_PGM_like"/>
    <property type="match status" value="1"/>
</dbReference>
<dbReference type="FunFam" id="3.40.50.1240:FF:000077">
    <property type="entry name" value="Glucosyl-3-phosphoglycerate phosphatase"/>
    <property type="match status" value="1"/>
</dbReference>
<dbReference type="Gene3D" id="3.40.50.1240">
    <property type="entry name" value="Phosphoglycerate mutase-like"/>
    <property type="match status" value="1"/>
</dbReference>
<dbReference type="InterPro" id="IPR013078">
    <property type="entry name" value="His_Pase_superF_clade-1"/>
</dbReference>
<dbReference type="InterPro" id="IPR029033">
    <property type="entry name" value="His_PPase_superfam"/>
</dbReference>
<dbReference type="InterPro" id="IPR001345">
    <property type="entry name" value="PG/BPGM_mutase_AS"/>
</dbReference>
<dbReference type="InterPro" id="IPR050275">
    <property type="entry name" value="PGM_Phosphatase"/>
</dbReference>
<dbReference type="PANTHER" id="PTHR48100">
    <property type="entry name" value="BROAD-SPECIFICITY PHOSPHATASE YOR283W-RELATED"/>
    <property type="match status" value="1"/>
</dbReference>
<dbReference type="PANTHER" id="PTHR48100:SF62">
    <property type="entry name" value="GLUCOSYL-3-PHOSPHOGLYCERATE PHOSPHATASE"/>
    <property type="match status" value="1"/>
</dbReference>
<dbReference type="Pfam" id="PF00300">
    <property type="entry name" value="His_Phos_1"/>
    <property type="match status" value="1"/>
</dbReference>
<dbReference type="SMART" id="SM00855">
    <property type="entry name" value="PGAM"/>
    <property type="match status" value="1"/>
</dbReference>
<dbReference type="SUPFAM" id="SSF53254">
    <property type="entry name" value="Phosphoglycerate mutase-like"/>
    <property type="match status" value="1"/>
</dbReference>
<dbReference type="PROSITE" id="PS00175">
    <property type="entry name" value="PG_MUTASE"/>
    <property type="match status" value="1"/>
</dbReference>
<protein>
    <recommendedName>
        <fullName>Glucosyl-3-phosphoglycerate phosphatase</fullName>
        <ecNumber evidence="1">3.1.3.85</ecNumber>
    </recommendedName>
    <alternativeName>
        <fullName>Mannosyl-3-phosphoglycerate phosphatase</fullName>
        <ecNumber evidence="1">3.1.3.70</ecNumber>
    </alternativeName>
</protein>
<accession>P9WIC6</accession>
<accession>L0T9S0</accession>
<accession>P71724</accession>
<accession>Q7D764</accession>
<comment type="function">
    <text evidence="1">Involved in the biosynthesis of mycobacterial methylglucose lipopolysaccharides (MGLPs). Catalyzes the dephosphorylation of glucosyl-3-phosphoglycerate (GPG) to glucosylglycerate (GG). GPG is the preferred substrate, but GpgP also exhibits low dephosphorylation activity on mannosyl-3-phosphoglycerate (MPG) and mannosylglucosyl-3-phosphoglycerate (MGPG) in vitro. Shows only trace of phosphoglycerate mutase (PGM) activity.</text>
</comment>
<comment type="catalytic activity">
    <reaction evidence="1">
        <text>(2R)-2-O-(alpha-D-glucopyranosyl)-3-phospho-glycerate + H2O = (2R)-2-O-(alpha-D-glucopyranosyl)-glycerate + phosphate</text>
        <dbReference type="Rhea" id="RHEA:31343"/>
        <dbReference type="ChEBI" id="CHEBI:15377"/>
        <dbReference type="ChEBI" id="CHEBI:43474"/>
        <dbReference type="ChEBI" id="CHEBI:62510"/>
        <dbReference type="ChEBI" id="CHEBI:62600"/>
        <dbReference type="EC" id="3.1.3.85"/>
    </reaction>
    <physiologicalReaction direction="left-to-right" evidence="1">
        <dbReference type="Rhea" id="RHEA:31344"/>
    </physiologicalReaction>
</comment>
<comment type="catalytic activity">
    <reaction evidence="1">
        <text>2-O-(alpha-D-mannosyl)-3-phosphoglycerate + H2O = (2R)-2-O-(alpha-D-mannosyl)-glycerate + phosphate</text>
        <dbReference type="Rhea" id="RHEA:19309"/>
        <dbReference type="ChEBI" id="CHEBI:15377"/>
        <dbReference type="ChEBI" id="CHEBI:43474"/>
        <dbReference type="ChEBI" id="CHEBI:57541"/>
        <dbReference type="ChEBI" id="CHEBI:57744"/>
        <dbReference type="EC" id="3.1.3.70"/>
    </reaction>
    <physiologicalReaction direction="left-to-right" evidence="1">
        <dbReference type="Rhea" id="RHEA:19310"/>
    </physiologicalReaction>
</comment>
<comment type="catalytic activity">
    <reaction evidence="1">
        <text>(2R)-2-O-[alpha-D-mannopyranosyl-(1-&gt;2)-alpha-D-glucopyranosyl]-3-phospho-glycerate + H2O = (2R)-2-O-[alpha-D-mannopyranosyl-(1-&gt;2)-alpha-D-glucopyranosyl]-glycerate + phosphate</text>
        <dbReference type="Rhea" id="RHEA:47696"/>
        <dbReference type="ChEBI" id="CHEBI:15377"/>
        <dbReference type="ChEBI" id="CHEBI:43474"/>
        <dbReference type="ChEBI" id="CHEBI:62602"/>
        <dbReference type="ChEBI" id="CHEBI:87836"/>
    </reaction>
    <physiologicalReaction direction="left-to-right" evidence="1">
        <dbReference type="Rhea" id="RHEA:47697"/>
    </physiologicalReaction>
</comment>
<comment type="subunit">
    <text evidence="1">Homodimer. Dimerization of the enzyme is essential for its dephosphorylation activity.</text>
</comment>
<comment type="similarity">
    <text evidence="2">Belongs to the phosphoglycerate mutase family.</text>
</comment>
<proteinExistence type="inferred from homology"/>